<organism>
    <name type="scientific">Arabidopsis thaliana</name>
    <name type="common">Mouse-ear cress</name>
    <dbReference type="NCBI Taxonomy" id="3702"/>
    <lineage>
        <taxon>Eukaryota</taxon>
        <taxon>Viridiplantae</taxon>
        <taxon>Streptophyta</taxon>
        <taxon>Embryophyta</taxon>
        <taxon>Tracheophyta</taxon>
        <taxon>Spermatophyta</taxon>
        <taxon>Magnoliopsida</taxon>
        <taxon>eudicotyledons</taxon>
        <taxon>Gunneridae</taxon>
        <taxon>Pentapetalae</taxon>
        <taxon>rosids</taxon>
        <taxon>malvids</taxon>
        <taxon>Brassicales</taxon>
        <taxon>Brassicaceae</taxon>
        <taxon>Camelineae</taxon>
        <taxon>Arabidopsis</taxon>
    </lineage>
</organism>
<reference key="1">
    <citation type="journal article" date="1998" name="J. Biol. Chem.">
        <title>Identification and characterization of DegP, a serine protease associated with the luminal side of the thylakoid membrane.</title>
        <authorList>
            <person name="Itzhaki H."/>
            <person name="Naveh L."/>
            <person name="Lindahl M."/>
            <person name="Cook M."/>
            <person name="Adam Z."/>
        </authorList>
    </citation>
    <scope>NUCLEOTIDE SEQUENCE [MRNA]</scope>
    <scope>SUBCELLULAR LOCATION</scope>
    <scope>CHARACTERIZATION</scope>
</reference>
<reference key="2">
    <citation type="journal article" date="2000" name="DNA Res.">
        <title>Structural analysis of Arabidopsis thaliana chromosome 3. II. Sequence features of the 4,251,695 bp regions covered by 90 P1, TAC and BAC clones.</title>
        <authorList>
            <person name="Kaneko T."/>
            <person name="Katoh T."/>
            <person name="Sato S."/>
            <person name="Nakamura Y."/>
            <person name="Asamizu E."/>
            <person name="Tabata S."/>
        </authorList>
    </citation>
    <scope>NUCLEOTIDE SEQUENCE [LARGE SCALE GENOMIC DNA]</scope>
    <source>
        <strain>cv. Columbia</strain>
    </source>
</reference>
<reference key="3">
    <citation type="journal article" date="2017" name="Plant J.">
        <title>Araport11: a complete reannotation of the Arabidopsis thaliana reference genome.</title>
        <authorList>
            <person name="Cheng C.Y."/>
            <person name="Krishnakumar V."/>
            <person name="Chan A.P."/>
            <person name="Thibaud-Nissen F."/>
            <person name="Schobel S."/>
            <person name="Town C.D."/>
        </authorList>
    </citation>
    <scope>GENOME REANNOTATION</scope>
    <source>
        <strain>cv. Columbia</strain>
    </source>
</reference>
<reference key="4">
    <citation type="journal article" date="2003" name="Science">
        <title>Empirical analysis of transcriptional activity in the Arabidopsis genome.</title>
        <authorList>
            <person name="Yamada K."/>
            <person name="Lim J."/>
            <person name="Dale J.M."/>
            <person name="Chen H."/>
            <person name="Shinn P."/>
            <person name="Palm C.J."/>
            <person name="Southwick A.M."/>
            <person name="Wu H.C."/>
            <person name="Kim C.J."/>
            <person name="Nguyen M."/>
            <person name="Pham P.K."/>
            <person name="Cheuk R.F."/>
            <person name="Karlin-Newmann G."/>
            <person name="Liu S.X."/>
            <person name="Lam B."/>
            <person name="Sakano H."/>
            <person name="Wu T."/>
            <person name="Yu G."/>
            <person name="Miranda M."/>
            <person name="Quach H.L."/>
            <person name="Tripp M."/>
            <person name="Chang C.H."/>
            <person name="Lee J.M."/>
            <person name="Toriumi M.J."/>
            <person name="Chan M.M."/>
            <person name="Tang C.C."/>
            <person name="Onodera C.S."/>
            <person name="Deng J.M."/>
            <person name="Akiyama K."/>
            <person name="Ansari Y."/>
            <person name="Arakawa T."/>
            <person name="Banh J."/>
            <person name="Banno F."/>
            <person name="Bowser L."/>
            <person name="Brooks S.Y."/>
            <person name="Carninci P."/>
            <person name="Chao Q."/>
            <person name="Choy N."/>
            <person name="Enju A."/>
            <person name="Goldsmith A.D."/>
            <person name="Gurjal M."/>
            <person name="Hansen N.F."/>
            <person name="Hayashizaki Y."/>
            <person name="Johnson-Hopson C."/>
            <person name="Hsuan V.W."/>
            <person name="Iida K."/>
            <person name="Karnes M."/>
            <person name="Khan S."/>
            <person name="Koesema E."/>
            <person name="Ishida J."/>
            <person name="Jiang P.X."/>
            <person name="Jones T."/>
            <person name="Kawai J."/>
            <person name="Kamiya A."/>
            <person name="Meyers C."/>
            <person name="Nakajima M."/>
            <person name="Narusaka M."/>
            <person name="Seki M."/>
            <person name="Sakurai T."/>
            <person name="Satou M."/>
            <person name="Tamse R."/>
            <person name="Vaysberg M."/>
            <person name="Wallender E.K."/>
            <person name="Wong C."/>
            <person name="Yamamura Y."/>
            <person name="Yuan S."/>
            <person name="Shinozaki K."/>
            <person name="Davis R.W."/>
            <person name="Theologis A."/>
            <person name="Ecker J.R."/>
        </authorList>
    </citation>
    <scope>NUCLEOTIDE SEQUENCE [LARGE SCALE MRNA]</scope>
    <source>
        <strain>cv. Columbia</strain>
    </source>
</reference>
<reference key="5">
    <citation type="journal article" date="2002" name="J. Biol. Chem.">
        <title>Proteome map of the chloroplast lumen of Arabidopsis thaliana.</title>
        <authorList>
            <person name="Schubert M."/>
            <person name="Petersson U.A."/>
            <person name="Haas B.J."/>
            <person name="Funk C."/>
            <person name="Schroeder W.P."/>
            <person name="Kieselbach T."/>
        </authorList>
    </citation>
    <scope>PROTEIN SEQUENCE OF 106-120</scope>
    <scope>SUBCELLULAR LOCATION</scope>
    <source>
        <strain>cv. Columbia</strain>
    </source>
</reference>
<reference key="6">
    <citation type="journal article" date="2001" name="Plant Physiol.">
        <title>Chloroplast and mitochondrial proteases in Arabidopsis. A proposed nomenclature.</title>
        <authorList>
            <person name="Adam Z."/>
            <person name="Adamska I."/>
            <person name="Nakabayashi K."/>
            <person name="Ostersetzer O."/>
            <person name="Haussuhl K."/>
            <person name="Manuell A."/>
            <person name="Zheng B."/>
            <person name="Vallon O."/>
            <person name="Rodermel S.R."/>
            <person name="Shinozaki K."/>
            <person name="Clarke A.K."/>
        </authorList>
    </citation>
    <scope>GENE FAMILY</scope>
    <scope>NOMENCLATURE</scope>
</reference>
<reference key="7">
    <citation type="journal article" date="2012" name="Planta">
        <title>High light stimulates Deg1-dependent cleavage of the minor LHCII antenna proteins CP26 and CP29 and the PsbS protein in Arabidopsis thaliana.</title>
        <authorList>
            <person name="Zienkiewicz M."/>
            <person name="Ferenc A."/>
            <person name="Wasilewska W."/>
            <person name="Romanowska E."/>
        </authorList>
    </citation>
    <scope>INTERACTION WITH DEGP1</scope>
    <scope>SUBCELLULAR LOCATION</scope>
    <scope>MUTAGENESIS OF SER-282</scope>
</reference>
<sequence length="439" mass="46674">MATTTSCSLLLSSTLFLHSPPSSHLSFFNLSSSRSSPISLYPIRSKRYFRILSKLSLNDNNRDDDDDTLHFTPFSAVKPFFLLCTSVALSFSLFAASPAVESASAFVVSTPKKLQTDELATVRLFQENTPSVVYITNLAVRQDAFTLDVLEVPQGSGSGFVWDKQGHIVTNYHVIRGASDLRVTLADQTTFDAKVVGFDQDKDVAVLRIDAPKNKLRPIPVGVSADLLVGQKVFAIGNPFGLDHTLTTGVISGLRREISSAATGRPIQDVIQTDAAINPGNSGGPLLDSSGTLIGINTAIYSPSGASSGVGFSIPVDTVGGIVDQLVRFGKVTRPILGIKFAPDQSVEQLGVSGVLVLDAPPSGPAGKAGLQSTKRDGYGRLVLGDIITSVNGTKVSNGSDLYRILDQCKVGDEVTVEVLRGDHKEKISVTLEPKPDES</sequence>
<gene>
    <name type="primary">DEGP1</name>
    <name type="synonym">DEG1</name>
    <name type="synonym">DEGP</name>
    <name type="ordered locus">At3g27925</name>
    <name type="ORF">K16N12.18</name>
</gene>
<proteinExistence type="evidence at protein level"/>
<accession>O22609</accession>
<accession>Q94BX6</accession>
<accession>Q9LK85</accession>
<feature type="transit peptide" description="Chloroplast" evidence="1">
    <location>
        <begin position="1"/>
        <end status="unknown"/>
    </location>
</feature>
<feature type="transit peptide" description="Thylakoid" evidence="3">
    <location>
        <begin status="unknown"/>
        <end position="105"/>
    </location>
</feature>
<feature type="chain" id="PRO_0000026940" description="Protease Do-like 1, chloroplastic">
    <location>
        <begin position="106"/>
        <end position="439"/>
    </location>
</feature>
<feature type="domain" description="PDZ" evidence="2">
    <location>
        <begin position="326"/>
        <end position="423"/>
    </location>
</feature>
<feature type="region of interest" description="Serine protease">
    <location>
        <begin position="154"/>
        <end position="323"/>
    </location>
</feature>
<feature type="active site" description="Charge relay system" evidence="1">
    <location>
        <position position="173"/>
    </location>
</feature>
<feature type="active site" description="Charge relay system" evidence="1">
    <location>
        <position position="203"/>
    </location>
</feature>
<feature type="active site" description="Charge relay system" evidence="1">
    <location>
        <position position="282"/>
    </location>
</feature>
<feature type="mutagenesis site" description="Loss of activity." evidence="4">
    <original>S</original>
    <variation>G</variation>
    <location>
        <position position="282"/>
    </location>
</feature>
<feature type="sequence conflict" description="In Ref. 1." evidence="6" ref="1">
    <original>SSTLFLHSPPSSHL</original>
    <variation>HSPPSSQLSNST</variation>
    <location>
        <begin position="12"/>
        <end position="25"/>
    </location>
</feature>
<feature type="sequence conflict" description="In Ref. 1; AAC39436." evidence="6" ref="1">
    <original>I</original>
    <variation>V</variation>
    <location>
        <position position="38"/>
    </location>
</feature>
<feature type="sequence conflict" description="In Ref. 1; AAC39436." evidence="6" ref="1">
    <original>S</original>
    <variation>P</variation>
    <location>
        <position position="56"/>
    </location>
</feature>
<feature type="sequence conflict" description="In Ref. 1; AAC39436." evidence="6" ref="1">
    <original>R</original>
    <variation>G</variation>
    <location>
        <position position="62"/>
    </location>
</feature>
<feature type="sequence conflict" description="In Ref. 1; AAC39436." evidence="6" ref="1">
    <original>D</original>
    <variation>G</variation>
    <location>
        <position position="66"/>
    </location>
</feature>
<feature type="sequence conflict" description="In Ref. 1; AAC39436." evidence="6" ref="1">
    <original>HF</original>
    <variation>LL</variation>
    <location>
        <begin position="70"/>
        <end position="71"/>
    </location>
</feature>
<feature type="sequence conflict" description="In Ref. 1; AAC39436." evidence="6" ref="1">
    <original>V</original>
    <variation>L</variation>
    <location>
        <position position="357"/>
    </location>
</feature>
<feature type="sequence conflict" description="In Ref. 1; AAC39436." evidence="6" ref="1">
    <original>V</original>
    <variation>I</variation>
    <location>
        <position position="383"/>
    </location>
</feature>
<feature type="sequence conflict" description="In Ref. 1; AAC39436." evidence="6" ref="1">
    <original>E</original>
    <variation>Q</variation>
    <location>
        <position position="418"/>
    </location>
</feature>
<feature type="helix" evidence="7">
    <location>
        <begin position="116"/>
        <end position="128"/>
    </location>
</feature>
<feature type="helix" evidence="7">
    <location>
        <begin position="129"/>
        <end position="131"/>
    </location>
</feature>
<feature type="strand" evidence="7">
    <location>
        <begin position="132"/>
        <end position="142"/>
    </location>
</feature>
<feature type="strand" evidence="7">
    <location>
        <begin position="144"/>
        <end position="146"/>
    </location>
</feature>
<feature type="strand" evidence="7">
    <location>
        <begin position="149"/>
        <end position="163"/>
    </location>
</feature>
<feature type="turn" evidence="7">
    <location>
        <begin position="164"/>
        <end position="166"/>
    </location>
</feature>
<feature type="strand" evidence="7">
    <location>
        <begin position="167"/>
        <end position="170"/>
    </location>
</feature>
<feature type="helix" evidence="7">
    <location>
        <begin position="172"/>
        <end position="175"/>
    </location>
</feature>
<feature type="strand" evidence="7">
    <location>
        <begin position="179"/>
        <end position="184"/>
    </location>
</feature>
<feature type="strand" evidence="7">
    <location>
        <begin position="190"/>
        <end position="199"/>
    </location>
</feature>
<feature type="helix" evidence="7">
    <location>
        <begin position="200"/>
        <end position="202"/>
    </location>
</feature>
<feature type="strand" evidence="7">
    <location>
        <begin position="204"/>
        <end position="208"/>
    </location>
</feature>
<feature type="helix" evidence="7">
    <location>
        <begin position="213"/>
        <end position="215"/>
    </location>
</feature>
<feature type="strand" evidence="7">
    <location>
        <begin position="232"/>
        <end position="237"/>
    </location>
</feature>
<feature type="helix" evidence="7">
    <location>
        <begin position="239"/>
        <end position="241"/>
    </location>
</feature>
<feature type="strand" evidence="7">
    <location>
        <begin position="245"/>
        <end position="258"/>
    </location>
</feature>
<feature type="strand" evidence="7">
    <location>
        <begin position="261"/>
        <end position="265"/>
    </location>
</feature>
<feature type="strand" evidence="7">
    <location>
        <begin position="267"/>
        <end position="273"/>
    </location>
</feature>
<feature type="strand" evidence="7">
    <location>
        <begin position="285"/>
        <end position="287"/>
    </location>
</feature>
<feature type="strand" evidence="7">
    <location>
        <begin position="293"/>
        <end position="301"/>
    </location>
</feature>
<feature type="strand" evidence="7">
    <location>
        <begin position="303"/>
        <end position="306"/>
    </location>
</feature>
<feature type="strand" evidence="7">
    <location>
        <begin position="311"/>
        <end position="315"/>
    </location>
</feature>
<feature type="helix" evidence="7">
    <location>
        <begin position="316"/>
        <end position="329"/>
    </location>
</feature>
<feature type="strand" evidence="7">
    <location>
        <begin position="339"/>
        <end position="341"/>
    </location>
</feature>
<feature type="turn" evidence="7">
    <location>
        <begin position="344"/>
        <end position="351"/>
    </location>
</feature>
<feature type="strand" evidence="7">
    <location>
        <begin position="353"/>
        <end position="359"/>
    </location>
</feature>
<feature type="strand" evidence="7">
    <location>
        <begin position="362"/>
        <end position="364"/>
    </location>
</feature>
<feature type="helix" evidence="7">
    <location>
        <begin position="365"/>
        <end position="369"/>
    </location>
</feature>
<feature type="strand" evidence="7">
    <location>
        <begin position="378"/>
        <end position="380"/>
    </location>
</feature>
<feature type="strand" evidence="7">
    <location>
        <begin position="397"/>
        <end position="399"/>
    </location>
</feature>
<feature type="helix" evidence="7">
    <location>
        <begin position="400"/>
        <end position="406"/>
    </location>
</feature>
<feature type="strand" evidence="7">
    <location>
        <begin position="414"/>
        <end position="420"/>
    </location>
</feature>
<feature type="strand" evidence="7">
    <location>
        <begin position="422"/>
        <end position="431"/>
    </location>
</feature>
<keyword id="KW-0002">3D-structure</keyword>
<keyword id="KW-0150">Chloroplast</keyword>
<keyword id="KW-0903">Direct protein sequencing</keyword>
<keyword id="KW-0378">Hydrolase</keyword>
<keyword id="KW-0472">Membrane</keyword>
<keyword id="KW-0934">Plastid</keyword>
<keyword id="KW-0645">Protease</keyword>
<keyword id="KW-1185">Reference proteome</keyword>
<keyword id="KW-0720">Serine protease</keyword>
<keyword id="KW-0346">Stress response</keyword>
<keyword id="KW-0793">Thylakoid</keyword>
<keyword id="KW-0809">Transit peptide</keyword>
<comment type="function">
    <text evidence="4 5">Serine protease that is required at high temperature. May be involved in the degradation of damaged proteins. In vivo, can degrade beta-casein.</text>
</comment>
<comment type="activity regulation">
    <text evidence="5">Inhibited by phenylmethylsulfonyl fluoride and O-phenanthroline.</text>
</comment>
<comment type="subunit">
    <text evidence="4">Interacts with PTAC16 and other potential targets for degradation under high light conditions.</text>
</comment>
<comment type="interaction">
    <interactant intactId="EBI-2895934">
        <id>O22609</id>
    </interactant>
    <interactant intactId="EBI-2895934">
        <id>O22609</id>
        <label>DEGP1</label>
    </interactant>
    <organismsDiffer>false</organismsDiffer>
    <experiments>2</experiments>
</comment>
<comment type="subcellular location">
    <subcellularLocation>
        <location evidence="3 4 5">Plastid</location>
        <location evidence="3 4 5">Chloroplast thylakoid membrane</location>
        <topology evidence="3 5">Peripheral membrane protein</topology>
        <orientation evidence="3 5">Lumenal side</orientation>
    </subcellularLocation>
</comment>
<comment type="induction">
    <text evidence="5">By heat shock.</text>
</comment>
<comment type="similarity">
    <text evidence="6">Belongs to the peptidase S1C family.</text>
</comment>
<name>DEGP1_ARATH</name>
<evidence type="ECO:0000255" key="1"/>
<evidence type="ECO:0000255" key="2">
    <source>
        <dbReference type="PROSITE-ProRule" id="PRU00143"/>
    </source>
</evidence>
<evidence type="ECO:0000269" key="3">
    <source>
    </source>
</evidence>
<evidence type="ECO:0000269" key="4">
    <source>
    </source>
</evidence>
<evidence type="ECO:0000269" key="5">
    <source>
    </source>
</evidence>
<evidence type="ECO:0000305" key="6"/>
<evidence type="ECO:0007829" key="7">
    <source>
        <dbReference type="PDB" id="3QO6"/>
    </source>
</evidence>
<protein>
    <recommendedName>
        <fullName>Protease Do-like 1, chloroplastic</fullName>
        <ecNumber>3.4.21.-</ecNumber>
    </recommendedName>
    <alternativeName>
        <fullName>Protein DEGRADATION OF PERIPLASMIC PROTEINS 1</fullName>
        <shortName>DEGP PROTEASE 1</shortName>
    </alternativeName>
</protein>
<dbReference type="EC" id="3.4.21.-"/>
<dbReference type="EMBL" id="AF028842">
    <property type="protein sequence ID" value="AAC39436.1"/>
    <property type="molecule type" value="mRNA"/>
</dbReference>
<dbReference type="EMBL" id="AP000371">
    <property type="protein sequence ID" value="BAB02539.1"/>
    <property type="molecule type" value="Genomic_DNA"/>
</dbReference>
<dbReference type="EMBL" id="AP001302">
    <property type="protein sequence ID" value="BAB02539.1"/>
    <property type="status" value="JOINED"/>
    <property type="molecule type" value="Genomic_DNA"/>
</dbReference>
<dbReference type="EMBL" id="CP002686">
    <property type="protein sequence ID" value="AEE77381.1"/>
    <property type="molecule type" value="Genomic_DNA"/>
</dbReference>
<dbReference type="EMBL" id="CP002686">
    <property type="protein sequence ID" value="ANM63717.1"/>
    <property type="molecule type" value="Genomic_DNA"/>
</dbReference>
<dbReference type="EMBL" id="AY039585">
    <property type="protein sequence ID" value="AAK62640.1"/>
    <property type="molecule type" value="mRNA"/>
</dbReference>
<dbReference type="EMBL" id="AY113073">
    <property type="protein sequence ID" value="AAM47381.1"/>
    <property type="molecule type" value="mRNA"/>
</dbReference>
<dbReference type="RefSeq" id="NP_001325789.1">
    <property type="nucleotide sequence ID" value="NM_001338921.1"/>
</dbReference>
<dbReference type="RefSeq" id="NP_189431.2">
    <property type="nucleotide sequence ID" value="NM_113709.5"/>
</dbReference>
<dbReference type="PDB" id="3QO6">
    <property type="method" value="X-ray"/>
    <property type="resolution" value="2.50 A"/>
    <property type="chains" value="A/B/C=105-439"/>
</dbReference>
<dbReference type="PDBsum" id="3QO6"/>
<dbReference type="SMR" id="O22609"/>
<dbReference type="BioGRID" id="7746">
    <property type="interactions" value="13"/>
</dbReference>
<dbReference type="DIP" id="DIP-56439N"/>
<dbReference type="FunCoup" id="O22609">
    <property type="interactions" value="820"/>
</dbReference>
<dbReference type="IntAct" id="O22609">
    <property type="interactions" value="2"/>
</dbReference>
<dbReference type="STRING" id="3702.O22609"/>
<dbReference type="MEROPS" id="S01.472"/>
<dbReference type="iPTMnet" id="O22609"/>
<dbReference type="PaxDb" id="3702-AT3G27925.1"/>
<dbReference type="ProteomicsDB" id="224601"/>
<dbReference type="EnsemblPlants" id="AT3G27925.1">
    <property type="protein sequence ID" value="AT3G27925.1"/>
    <property type="gene ID" value="AT3G27925"/>
</dbReference>
<dbReference type="EnsemblPlants" id="AT3G27925.2">
    <property type="protein sequence ID" value="AT3G27925.2"/>
    <property type="gene ID" value="AT3G27925"/>
</dbReference>
<dbReference type="GeneID" id="822416"/>
<dbReference type="Gramene" id="AT3G27925.1">
    <property type="protein sequence ID" value="AT3G27925.1"/>
    <property type="gene ID" value="AT3G27925"/>
</dbReference>
<dbReference type="Gramene" id="AT3G27925.2">
    <property type="protein sequence ID" value="AT3G27925.2"/>
    <property type="gene ID" value="AT3G27925"/>
</dbReference>
<dbReference type="KEGG" id="ath:AT3G27925"/>
<dbReference type="Araport" id="AT3G27925"/>
<dbReference type="TAIR" id="AT3G27925">
    <property type="gene designation" value="DEG1"/>
</dbReference>
<dbReference type="eggNOG" id="KOG1320">
    <property type="taxonomic scope" value="Eukaryota"/>
</dbReference>
<dbReference type="HOGENOM" id="CLU_020120_2_0_1"/>
<dbReference type="InParanoid" id="O22609"/>
<dbReference type="OMA" id="IMSPEGY"/>
<dbReference type="OrthoDB" id="4217619at2759"/>
<dbReference type="PhylomeDB" id="O22609"/>
<dbReference type="EvolutionaryTrace" id="O22609"/>
<dbReference type="PRO" id="PR:O22609"/>
<dbReference type="Proteomes" id="UP000006548">
    <property type="component" value="Chromosome 3"/>
</dbReference>
<dbReference type="ExpressionAtlas" id="O22609">
    <property type="expression patterns" value="baseline and differential"/>
</dbReference>
<dbReference type="GO" id="GO:0009507">
    <property type="term" value="C:chloroplast"/>
    <property type="evidence" value="ECO:0007005"/>
    <property type="project" value="TAIR"/>
</dbReference>
<dbReference type="GO" id="GO:0009534">
    <property type="term" value="C:chloroplast thylakoid"/>
    <property type="evidence" value="ECO:0000314"/>
    <property type="project" value="TAIR"/>
</dbReference>
<dbReference type="GO" id="GO:0009535">
    <property type="term" value="C:chloroplast thylakoid membrane"/>
    <property type="evidence" value="ECO:0000314"/>
    <property type="project" value="UniProtKB"/>
</dbReference>
<dbReference type="GO" id="GO:0005829">
    <property type="term" value="C:cytosol"/>
    <property type="evidence" value="ECO:0007005"/>
    <property type="project" value="TAIR"/>
</dbReference>
<dbReference type="GO" id="GO:0005634">
    <property type="term" value="C:nucleus"/>
    <property type="evidence" value="ECO:0007005"/>
    <property type="project" value="TAIR"/>
</dbReference>
<dbReference type="GO" id="GO:0009579">
    <property type="term" value="C:thylakoid"/>
    <property type="evidence" value="ECO:0007005"/>
    <property type="project" value="TAIR"/>
</dbReference>
<dbReference type="GO" id="GO:0031977">
    <property type="term" value="C:thylakoid lumen"/>
    <property type="evidence" value="ECO:0007005"/>
    <property type="project" value="TAIR"/>
</dbReference>
<dbReference type="GO" id="GO:0042802">
    <property type="term" value="F:identical protein binding"/>
    <property type="evidence" value="ECO:0000353"/>
    <property type="project" value="IntAct"/>
</dbReference>
<dbReference type="GO" id="GO:0004252">
    <property type="term" value="F:serine-type endopeptidase activity"/>
    <property type="evidence" value="ECO:0000314"/>
    <property type="project" value="TAIR"/>
</dbReference>
<dbReference type="GO" id="GO:0008236">
    <property type="term" value="F:serine-type peptidase activity"/>
    <property type="evidence" value="ECO:0000314"/>
    <property type="project" value="TAIR"/>
</dbReference>
<dbReference type="GO" id="GO:0010206">
    <property type="term" value="P:photosystem II repair"/>
    <property type="evidence" value="ECO:0000315"/>
    <property type="project" value="TAIR"/>
</dbReference>
<dbReference type="GO" id="GO:0030163">
    <property type="term" value="P:protein catabolic process"/>
    <property type="evidence" value="ECO:0000304"/>
    <property type="project" value="TAIR"/>
</dbReference>
<dbReference type="GO" id="GO:0006508">
    <property type="term" value="P:proteolysis"/>
    <property type="evidence" value="ECO:0007669"/>
    <property type="project" value="UniProtKB-KW"/>
</dbReference>
<dbReference type="CDD" id="cd00990">
    <property type="entry name" value="cpPDZ_AtDEGP1-like"/>
    <property type="match status" value="1"/>
</dbReference>
<dbReference type="FunFam" id="2.40.10.10:FF:000001">
    <property type="entry name" value="Periplasmic serine protease DegS"/>
    <property type="match status" value="1"/>
</dbReference>
<dbReference type="FunFam" id="2.30.42.10:FF:000202">
    <property type="entry name" value="Protease Do-like 1, chloroplastic"/>
    <property type="match status" value="1"/>
</dbReference>
<dbReference type="FunFam" id="2.40.10.10:FF:000103">
    <property type="entry name" value="Protease Do-like 1, chloroplastic"/>
    <property type="match status" value="1"/>
</dbReference>
<dbReference type="Gene3D" id="2.30.42.10">
    <property type="match status" value="1"/>
</dbReference>
<dbReference type="Gene3D" id="2.40.10.10">
    <property type="entry name" value="Trypsin-like serine proteases"/>
    <property type="match status" value="2"/>
</dbReference>
<dbReference type="InterPro" id="IPR051201">
    <property type="entry name" value="Chloro_Bact_Ser_Proteases"/>
</dbReference>
<dbReference type="InterPro" id="IPR039382">
    <property type="entry name" value="DEGP1/8_PDZ_dom"/>
</dbReference>
<dbReference type="InterPro" id="IPR001478">
    <property type="entry name" value="PDZ"/>
</dbReference>
<dbReference type="InterPro" id="IPR036034">
    <property type="entry name" value="PDZ_sf"/>
</dbReference>
<dbReference type="InterPro" id="IPR009003">
    <property type="entry name" value="Peptidase_S1_PA"/>
</dbReference>
<dbReference type="InterPro" id="IPR043504">
    <property type="entry name" value="Peptidase_S1_PA_chymotrypsin"/>
</dbReference>
<dbReference type="InterPro" id="IPR001940">
    <property type="entry name" value="Peptidase_S1C"/>
</dbReference>
<dbReference type="PANTHER" id="PTHR43343:SF2">
    <property type="entry name" value="PDZ DOMAIN-CONTAINING PROTEIN"/>
    <property type="match status" value="1"/>
</dbReference>
<dbReference type="PANTHER" id="PTHR43343">
    <property type="entry name" value="PEPTIDASE S12"/>
    <property type="match status" value="1"/>
</dbReference>
<dbReference type="Pfam" id="PF13180">
    <property type="entry name" value="PDZ_2"/>
    <property type="match status" value="1"/>
</dbReference>
<dbReference type="Pfam" id="PF13365">
    <property type="entry name" value="Trypsin_2"/>
    <property type="match status" value="1"/>
</dbReference>
<dbReference type="PRINTS" id="PR00834">
    <property type="entry name" value="PROTEASES2C"/>
</dbReference>
<dbReference type="SMART" id="SM00228">
    <property type="entry name" value="PDZ"/>
    <property type="match status" value="1"/>
</dbReference>
<dbReference type="SUPFAM" id="SSF50156">
    <property type="entry name" value="PDZ domain-like"/>
    <property type="match status" value="1"/>
</dbReference>
<dbReference type="SUPFAM" id="SSF50494">
    <property type="entry name" value="Trypsin-like serine proteases"/>
    <property type="match status" value="1"/>
</dbReference>
<dbReference type="PROSITE" id="PS50106">
    <property type="entry name" value="PDZ"/>
    <property type="match status" value="1"/>
</dbReference>